<evidence type="ECO:0000255" key="1">
    <source>
        <dbReference type="HAMAP-Rule" id="MF_01320"/>
    </source>
</evidence>
<evidence type="ECO:0000256" key="2">
    <source>
        <dbReference type="SAM" id="MobiDB-lite"/>
    </source>
</evidence>
<evidence type="ECO:0000305" key="3"/>
<gene>
    <name evidence="1" type="primary">rplB</name>
    <name type="ordered locus">SaurJH1_2315</name>
</gene>
<comment type="function">
    <text evidence="1">One of the primary rRNA binding proteins. Required for association of the 30S and 50S subunits to form the 70S ribosome, for tRNA binding and peptide bond formation. It has been suggested to have peptidyltransferase activity; this is somewhat controversial. Makes several contacts with the 16S rRNA in the 70S ribosome.</text>
</comment>
<comment type="subunit">
    <text evidence="1">Part of the 50S ribosomal subunit. Forms a bridge to the 30S subunit in the 70S ribosome.</text>
</comment>
<comment type="similarity">
    <text evidence="1">Belongs to the universal ribosomal protein uL2 family.</text>
</comment>
<feature type="chain" id="PRO_1000086356" description="Large ribosomal subunit protein uL2">
    <location>
        <begin position="1"/>
        <end position="277"/>
    </location>
</feature>
<feature type="region of interest" description="Disordered" evidence="2">
    <location>
        <begin position="36"/>
        <end position="55"/>
    </location>
</feature>
<feature type="region of interest" description="Disordered" evidence="2">
    <location>
        <begin position="213"/>
        <end position="277"/>
    </location>
</feature>
<dbReference type="EMBL" id="CP000736">
    <property type="protein sequence ID" value="ABR53140.1"/>
    <property type="molecule type" value="Genomic_DNA"/>
</dbReference>
<dbReference type="SMR" id="A6U3X2"/>
<dbReference type="KEGG" id="sah:SaurJH1_2315"/>
<dbReference type="HOGENOM" id="CLU_036235_2_1_9"/>
<dbReference type="GO" id="GO:0015934">
    <property type="term" value="C:large ribosomal subunit"/>
    <property type="evidence" value="ECO:0007669"/>
    <property type="project" value="InterPro"/>
</dbReference>
<dbReference type="GO" id="GO:0019843">
    <property type="term" value="F:rRNA binding"/>
    <property type="evidence" value="ECO:0007669"/>
    <property type="project" value="UniProtKB-UniRule"/>
</dbReference>
<dbReference type="GO" id="GO:0003735">
    <property type="term" value="F:structural constituent of ribosome"/>
    <property type="evidence" value="ECO:0007669"/>
    <property type="project" value="InterPro"/>
</dbReference>
<dbReference type="GO" id="GO:0016740">
    <property type="term" value="F:transferase activity"/>
    <property type="evidence" value="ECO:0007669"/>
    <property type="project" value="InterPro"/>
</dbReference>
<dbReference type="GO" id="GO:0002181">
    <property type="term" value="P:cytoplasmic translation"/>
    <property type="evidence" value="ECO:0007669"/>
    <property type="project" value="TreeGrafter"/>
</dbReference>
<dbReference type="FunFam" id="2.30.30.30:FF:000001">
    <property type="entry name" value="50S ribosomal protein L2"/>
    <property type="match status" value="1"/>
</dbReference>
<dbReference type="FunFam" id="2.40.50.140:FF:000003">
    <property type="entry name" value="50S ribosomal protein L2"/>
    <property type="match status" value="1"/>
</dbReference>
<dbReference type="FunFam" id="4.10.950.10:FF:000001">
    <property type="entry name" value="50S ribosomal protein L2"/>
    <property type="match status" value="1"/>
</dbReference>
<dbReference type="Gene3D" id="2.30.30.30">
    <property type="match status" value="1"/>
</dbReference>
<dbReference type="Gene3D" id="2.40.50.140">
    <property type="entry name" value="Nucleic acid-binding proteins"/>
    <property type="match status" value="1"/>
</dbReference>
<dbReference type="Gene3D" id="4.10.950.10">
    <property type="entry name" value="Ribosomal protein L2, domain 3"/>
    <property type="match status" value="1"/>
</dbReference>
<dbReference type="HAMAP" id="MF_01320_B">
    <property type="entry name" value="Ribosomal_uL2_B"/>
    <property type="match status" value="1"/>
</dbReference>
<dbReference type="InterPro" id="IPR012340">
    <property type="entry name" value="NA-bd_OB-fold"/>
</dbReference>
<dbReference type="InterPro" id="IPR014722">
    <property type="entry name" value="Rib_uL2_dom2"/>
</dbReference>
<dbReference type="InterPro" id="IPR002171">
    <property type="entry name" value="Ribosomal_uL2"/>
</dbReference>
<dbReference type="InterPro" id="IPR005880">
    <property type="entry name" value="Ribosomal_uL2_bac/org-type"/>
</dbReference>
<dbReference type="InterPro" id="IPR022669">
    <property type="entry name" value="Ribosomal_uL2_C"/>
</dbReference>
<dbReference type="InterPro" id="IPR022671">
    <property type="entry name" value="Ribosomal_uL2_CS"/>
</dbReference>
<dbReference type="InterPro" id="IPR014726">
    <property type="entry name" value="Ribosomal_uL2_dom3"/>
</dbReference>
<dbReference type="InterPro" id="IPR022666">
    <property type="entry name" value="Ribosomal_uL2_RNA-bd_dom"/>
</dbReference>
<dbReference type="InterPro" id="IPR008991">
    <property type="entry name" value="Translation_prot_SH3-like_sf"/>
</dbReference>
<dbReference type="NCBIfam" id="TIGR01171">
    <property type="entry name" value="rplB_bact"/>
    <property type="match status" value="1"/>
</dbReference>
<dbReference type="PANTHER" id="PTHR13691:SF5">
    <property type="entry name" value="LARGE RIBOSOMAL SUBUNIT PROTEIN UL2M"/>
    <property type="match status" value="1"/>
</dbReference>
<dbReference type="PANTHER" id="PTHR13691">
    <property type="entry name" value="RIBOSOMAL PROTEIN L2"/>
    <property type="match status" value="1"/>
</dbReference>
<dbReference type="Pfam" id="PF00181">
    <property type="entry name" value="Ribosomal_L2"/>
    <property type="match status" value="1"/>
</dbReference>
<dbReference type="Pfam" id="PF03947">
    <property type="entry name" value="Ribosomal_L2_C"/>
    <property type="match status" value="1"/>
</dbReference>
<dbReference type="PIRSF" id="PIRSF002158">
    <property type="entry name" value="Ribosomal_L2"/>
    <property type="match status" value="1"/>
</dbReference>
<dbReference type="SMART" id="SM01383">
    <property type="entry name" value="Ribosomal_L2"/>
    <property type="match status" value="1"/>
</dbReference>
<dbReference type="SMART" id="SM01382">
    <property type="entry name" value="Ribosomal_L2_C"/>
    <property type="match status" value="1"/>
</dbReference>
<dbReference type="SUPFAM" id="SSF50249">
    <property type="entry name" value="Nucleic acid-binding proteins"/>
    <property type="match status" value="1"/>
</dbReference>
<dbReference type="SUPFAM" id="SSF50104">
    <property type="entry name" value="Translation proteins SH3-like domain"/>
    <property type="match status" value="1"/>
</dbReference>
<dbReference type="PROSITE" id="PS00467">
    <property type="entry name" value="RIBOSOMAL_L2"/>
    <property type="match status" value="1"/>
</dbReference>
<organism>
    <name type="scientific">Staphylococcus aureus (strain JH1)</name>
    <dbReference type="NCBI Taxonomy" id="359787"/>
    <lineage>
        <taxon>Bacteria</taxon>
        <taxon>Bacillati</taxon>
        <taxon>Bacillota</taxon>
        <taxon>Bacilli</taxon>
        <taxon>Bacillales</taxon>
        <taxon>Staphylococcaceae</taxon>
        <taxon>Staphylococcus</taxon>
    </lineage>
</organism>
<proteinExistence type="inferred from homology"/>
<reference key="1">
    <citation type="submission" date="2007-06" db="EMBL/GenBank/DDBJ databases">
        <title>Complete sequence of chromosome of Staphylococcus aureus subsp. aureus JH1.</title>
        <authorList>
            <consortium name="US DOE Joint Genome Institute"/>
            <person name="Copeland A."/>
            <person name="Lucas S."/>
            <person name="Lapidus A."/>
            <person name="Barry K."/>
            <person name="Detter J.C."/>
            <person name="Glavina del Rio T."/>
            <person name="Hammon N."/>
            <person name="Israni S."/>
            <person name="Dalin E."/>
            <person name="Tice H."/>
            <person name="Pitluck S."/>
            <person name="Chain P."/>
            <person name="Malfatti S."/>
            <person name="Shin M."/>
            <person name="Vergez L."/>
            <person name="Schmutz J."/>
            <person name="Larimer F."/>
            <person name="Land M."/>
            <person name="Hauser L."/>
            <person name="Kyrpides N."/>
            <person name="Ivanova N."/>
            <person name="Tomasz A."/>
            <person name="Richardson P."/>
        </authorList>
    </citation>
    <scope>NUCLEOTIDE SEQUENCE [LARGE SCALE GENOMIC DNA]</scope>
    <source>
        <strain>JH1</strain>
    </source>
</reference>
<sequence>MAIKKYKPITNGRRNMTSLDFAEITKTTPEKSLLKPLPKKAGRNNQGKLTVRHHGGGHKRQYRVIDFKRNKDGINAKVDSIQYDPNRSANIALVVYADGEKRYIIAPKGLEVGQIVESGAEADIKVGNALPLQNIPVGTVVHNIELKPGKGGQIARSAGASAQVLGKEGKYVLIRLRSGEVRMILSTCRATIGQVGNLQHELVNVGKAGRSRWKGIRPTVRGSVMNPNDHPHGGGEGRAPIGRPSPMSPWGKPTLGKKTRRGKKSSDKLIVRGRKKK</sequence>
<protein>
    <recommendedName>
        <fullName evidence="1">Large ribosomal subunit protein uL2</fullName>
    </recommendedName>
    <alternativeName>
        <fullName evidence="3">50S ribosomal protein L2</fullName>
    </alternativeName>
</protein>
<name>RL2_STAA2</name>
<accession>A6U3X2</accession>
<keyword id="KW-0687">Ribonucleoprotein</keyword>
<keyword id="KW-0689">Ribosomal protein</keyword>
<keyword id="KW-0694">RNA-binding</keyword>
<keyword id="KW-0699">rRNA-binding</keyword>